<gene>
    <name evidence="1" type="primary">tpiA</name>
    <name type="ordered locus">PCC7424_4008</name>
</gene>
<comment type="function">
    <text evidence="1">Involved in the gluconeogenesis. Catalyzes stereospecifically the conversion of dihydroxyacetone phosphate (DHAP) to D-glyceraldehyde-3-phosphate (G3P).</text>
</comment>
<comment type="catalytic activity">
    <reaction evidence="1">
        <text>D-glyceraldehyde 3-phosphate = dihydroxyacetone phosphate</text>
        <dbReference type="Rhea" id="RHEA:18585"/>
        <dbReference type="ChEBI" id="CHEBI:57642"/>
        <dbReference type="ChEBI" id="CHEBI:59776"/>
        <dbReference type="EC" id="5.3.1.1"/>
    </reaction>
</comment>
<comment type="pathway">
    <text evidence="1">Carbohydrate biosynthesis; gluconeogenesis.</text>
</comment>
<comment type="pathway">
    <text evidence="1">Carbohydrate degradation; glycolysis; D-glyceraldehyde 3-phosphate from glycerone phosphate: step 1/1.</text>
</comment>
<comment type="subunit">
    <text evidence="1">Homodimer.</text>
</comment>
<comment type="subcellular location">
    <subcellularLocation>
        <location evidence="1">Cytoplasm</location>
    </subcellularLocation>
</comment>
<comment type="similarity">
    <text evidence="1">Belongs to the triosephosphate isomerase family.</text>
</comment>
<proteinExistence type="inferred from homology"/>
<evidence type="ECO:0000255" key="1">
    <source>
        <dbReference type="HAMAP-Rule" id="MF_00147"/>
    </source>
</evidence>
<organism>
    <name type="scientific">Gloeothece citriformis (strain PCC 7424)</name>
    <name type="common">Cyanothece sp. (strain PCC 7424)</name>
    <dbReference type="NCBI Taxonomy" id="65393"/>
    <lineage>
        <taxon>Bacteria</taxon>
        <taxon>Bacillati</taxon>
        <taxon>Cyanobacteriota</taxon>
        <taxon>Cyanophyceae</taxon>
        <taxon>Oscillatoriophycideae</taxon>
        <taxon>Chroococcales</taxon>
        <taxon>Aphanothecaceae</taxon>
        <taxon>Gloeothece</taxon>
        <taxon>Gloeothece citriformis</taxon>
    </lineage>
</organism>
<protein>
    <recommendedName>
        <fullName evidence="1">Triosephosphate isomerase</fullName>
        <shortName evidence="1">TIM</shortName>
        <shortName evidence="1">TPI</shortName>
        <ecNumber evidence="1">5.3.1.1</ecNumber>
    </recommendedName>
    <alternativeName>
        <fullName evidence="1">Triose-phosphate isomerase</fullName>
    </alternativeName>
</protein>
<name>TPIS_GLOC7</name>
<accession>B7KL10</accession>
<sequence length="241" mass="26526">MRKIIIAGNWKMYKTQAEALEFVQVFKSKIEDTDESREIVLCAPFTDLGAMSKNLHGSRIKLGAQNVHWEEAGAYTGEISGAMLTEIGVSYVIVGHSERRQYFGDTDETVNLRVLAAQKYGLIPILCVGESKSQRDAGETEKIIINQLKRDLVDVDQNKLVIAYEPIWAIGTGDTCESSEANRVIGIIREQLTNKNVSIQYGGSVKPGNIDEIMKQSEIDGALVGGASLNPADFAQIVNYK</sequence>
<dbReference type="EC" id="5.3.1.1" evidence="1"/>
<dbReference type="EMBL" id="CP001291">
    <property type="protein sequence ID" value="ACK72382.1"/>
    <property type="molecule type" value="Genomic_DNA"/>
</dbReference>
<dbReference type="RefSeq" id="WP_015955967.1">
    <property type="nucleotide sequence ID" value="NC_011729.1"/>
</dbReference>
<dbReference type="SMR" id="B7KL10"/>
<dbReference type="STRING" id="65393.PCC7424_4008"/>
<dbReference type="KEGG" id="cyc:PCC7424_4008"/>
<dbReference type="eggNOG" id="COG0149">
    <property type="taxonomic scope" value="Bacteria"/>
</dbReference>
<dbReference type="HOGENOM" id="CLU_024251_2_3_3"/>
<dbReference type="OrthoDB" id="9809429at2"/>
<dbReference type="UniPathway" id="UPA00109">
    <property type="reaction ID" value="UER00189"/>
</dbReference>
<dbReference type="UniPathway" id="UPA00138"/>
<dbReference type="Proteomes" id="UP000002384">
    <property type="component" value="Chromosome"/>
</dbReference>
<dbReference type="GO" id="GO:0005829">
    <property type="term" value="C:cytosol"/>
    <property type="evidence" value="ECO:0007669"/>
    <property type="project" value="TreeGrafter"/>
</dbReference>
<dbReference type="GO" id="GO:0004807">
    <property type="term" value="F:triose-phosphate isomerase activity"/>
    <property type="evidence" value="ECO:0007669"/>
    <property type="project" value="UniProtKB-UniRule"/>
</dbReference>
<dbReference type="GO" id="GO:0006094">
    <property type="term" value="P:gluconeogenesis"/>
    <property type="evidence" value="ECO:0007669"/>
    <property type="project" value="UniProtKB-UniRule"/>
</dbReference>
<dbReference type="GO" id="GO:0046166">
    <property type="term" value="P:glyceraldehyde-3-phosphate biosynthetic process"/>
    <property type="evidence" value="ECO:0007669"/>
    <property type="project" value="TreeGrafter"/>
</dbReference>
<dbReference type="GO" id="GO:0019563">
    <property type="term" value="P:glycerol catabolic process"/>
    <property type="evidence" value="ECO:0007669"/>
    <property type="project" value="TreeGrafter"/>
</dbReference>
<dbReference type="GO" id="GO:0006096">
    <property type="term" value="P:glycolytic process"/>
    <property type="evidence" value="ECO:0007669"/>
    <property type="project" value="UniProtKB-UniRule"/>
</dbReference>
<dbReference type="CDD" id="cd00311">
    <property type="entry name" value="TIM"/>
    <property type="match status" value="1"/>
</dbReference>
<dbReference type="FunFam" id="3.20.20.70:FF:000016">
    <property type="entry name" value="Triosephosphate isomerase"/>
    <property type="match status" value="1"/>
</dbReference>
<dbReference type="Gene3D" id="3.20.20.70">
    <property type="entry name" value="Aldolase class I"/>
    <property type="match status" value="1"/>
</dbReference>
<dbReference type="HAMAP" id="MF_00147_B">
    <property type="entry name" value="TIM_B"/>
    <property type="match status" value="1"/>
</dbReference>
<dbReference type="InterPro" id="IPR013785">
    <property type="entry name" value="Aldolase_TIM"/>
</dbReference>
<dbReference type="InterPro" id="IPR035990">
    <property type="entry name" value="TIM_sf"/>
</dbReference>
<dbReference type="InterPro" id="IPR022896">
    <property type="entry name" value="TrioseP_Isoase_bac/euk"/>
</dbReference>
<dbReference type="InterPro" id="IPR000652">
    <property type="entry name" value="Triosephosphate_isomerase"/>
</dbReference>
<dbReference type="InterPro" id="IPR020861">
    <property type="entry name" value="Triosephosphate_isomerase_AS"/>
</dbReference>
<dbReference type="NCBIfam" id="TIGR00419">
    <property type="entry name" value="tim"/>
    <property type="match status" value="1"/>
</dbReference>
<dbReference type="PANTHER" id="PTHR21139">
    <property type="entry name" value="TRIOSEPHOSPHATE ISOMERASE"/>
    <property type="match status" value="1"/>
</dbReference>
<dbReference type="PANTHER" id="PTHR21139:SF42">
    <property type="entry name" value="TRIOSEPHOSPHATE ISOMERASE"/>
    <property type="match status" value="1"/>
</dbReference>
<dbReference type="Pfam" id="PF00121">
    <property type="entry name" value="TIM"/>
    <property type="match status" value="1"/>
</dbReference>
<dbReference type="SUPFAM" id="SSF51351">
    <property type="entry name" value="Triosephosphate isomerase (TIM)"/>
    <property type="match status" value="1"/>
</dbReference>
<dbReference type="PROSITE" id="PS00171">
    <property type="entry name" value="TIM_1"/>
    <property type="match status" value="1"/>
</dbReference>
<dbReference type="PROSITE" id="PS51440">
    <property type="entry name" value="TIM_2"/>
    <property type="match status" value="1"/>
</dbReference>
<feature type="chain" id="PRO_1000118000" description="Triosephosphate isomerase">
    <location>
        <begin position="1"/>
        <end position="241"/>
    </location>
</feature>
<feature type="active site" description="Electrophile" evidence="1">
    <location>
        <position position="96"/>
    </location>
</feature>
<feature type="active site" description="Proton acceptor" evidence="1">
    <location>
        <position position="165"/>
    </location>
</feature>
<feature type="binding site" evidence="1">
    <location>
        <begin position="9"/>
        <end position="11"/>
    </location>
    <ligand>
        <name>substrate</name>
    </ligand>
</feature>
<feature type="binding site" evidence="1">
    <location>
        <position position="171"/>
    </location>
    <ligand>
        <name>substrate</name>
    </ligand>
</feature>
<feature type="binding site" evidence="1">
    <location>
        <position position="204"/>
    </location>
    <ligand>
        <name>substrate</name>
    </ligand>
</feature>
<feature type="binding site" evidence="1">
    <location>
        <begin position="225"/>
        <end position="226"/>
    </location>
    <ligand>
        <name>substrate</name>
    </ligand>
</feature>
<keyword id="KW-0963">Cytoplasm</keyword>
<keyword id="KW-0312">Gluconeogenesis</keyword>
<keyword id="KW-0324">Glycolysis</keyword>
<keyword id="KW-0413">Isomerase</keyword>
<keyword id="KW-1185">Reference proteome</keyword>
<reference key="1">
    <citation type="journal article" date="2011" name="MBio">
        <title>Novel metabolic attributes of the genus Cyanothece, comprising a group of unicellular nitrogen-fixing Cyanobacteria.</title>
        <authorList>
            <person name="Bandyopadhyay A."/>
            <person name="Elvitigala T."/>
            <person name="Welsh E."/>
            <person name="Stockel J."/>
            <person name="Liberton M."/>
            <person name="Min H."/>
            <person name="Sherman L.A."/>
            <person name="Pakrasi H.B."/>
        </authorList>
    </citation>
    <scope>NUCLEOTIDE SEQUENCE [LARGE SCALE GENOMIC DNA]</scope>
    <source>
        <strain>PCC 7424</strain>
    </source>
</reference>